<accession>Q54CP9</accession>
<reference key="1">
    <citation type="journal article" date="2005" name="Nature">
        <title>The genome of the social amoeba Dictyostelium discoideum.</title>
        <authorList>
            <person name="Eichinger L."/>
            <person name="Pachebat J.A."/>
            <person name="Gloeckner G."/>
            <person name="Rajandream M.A."/>
            <person name="Sucgang R."/>
            <person name="Berriman M."/>
            <person name="Song J."/>
            <person name="Olsen R."/>
            <person name="Szafranski K."/>
            <person name="Xu Q."/>
            <person name="Tunggal B."/>
            <person name="Kummerfeld S."/>
            <person name="Madera M."/>
            <person name="Konfortov B.A."/>
            <person name="Rivero F."/>
            <person name="Bankier A.T."/>
            <person name="Lehmann R."/>
            <person name="Hamlin N."/>
            <person name="Davies R."/>
            <person name="Gaudet P."/>
            <person name="Fey P."/>
            <person name="Pilcher K."/>
            <person name="Chen G."/>
            <person name="Saunders D."/>
            <person name="Sodergren E.J."/>
            <person name="Davis P."/>
            <person name="Kerhornou A."/>
            <person name="Nie X."/>
            <person name="Hall N."/>
            <person name="Anjard C."/>
            <person name="Hemphill L."/>
            <person name="Bason N."/>
            <person name="Farbrother P."/>
            <person name="Desany B."/>
            <person name="Just E."/>
            <person name="Morio T."/>
            <person name="Rost R."/>
            <person name="Churcher C.M."/>
            <person name="Cooper J."/>
            <person name="Haydock S."/>
            <person name="van Driessche N."/>
            <person name="Cronin A."/>
            <person name="Goodhead I."/>
            <person name="Muzny D.M."/>
            <person name="Mourier T."/>
            <person name="Pain A."/>
            <person name="Lu M."/>
            <person name="Harper D."/>
            <person name="Lindsay R."/>
            <person name="Hauser H."/>
            <person name="James K.D."/>
            <person name="Quiles M."/>
            <person name="Madan Babu M."/>
            <person name="Saito T."/>
            <person name="Buchrieser C."/>
            <person name="Wardroper A."/>
            <person name="Felder M."/>
            <person name="Thangavelu M."/>
            <person name="Johnson D."/>
            <person name="Knights A."/>
            <person name="Loulseged H."/>
            <person name="Mungall K.L."/>
            <person name="Oliver K."/>
            <person name="Price C."/>
            <person name="Quail M.A."/>
            <person name="Urushihara H."/>
            <person name="Hernandez J."/>
            <person name="Rabbinowitsch E."/>
            <person name="Steffen D."/>
            <person name="Sanders M."/>
            <person name="Ma J."/>
            <person name="Kohara Y."/>
            <person name="Sharp S."/>
            <person name="Simmonds M.N."/>
            <person name="Spiegler S."/>
            <person name="Tivey A."/>
            <person name="Sugano S."/>
            <person name="White B."/>
            <person name="Walker D."/>
            <person name="Woodward J.R."/>
            <person name="Winckler T."/>
            <person name="Tanaka Y."/>
            <person name="Shaulsky G."/>
            <person name="Schleicher M."/>
            <person name="Weinstock G.M."/>
            <person name="Rosenthal A."/>
            <person name="Cox E.C."/>
            <person name="Chisholm R.L."/>
            <person name="Gibbs R.A."/>
            <person name="Loomis W.F."/>
            <person name="Platzer M."/>
            <person name="Kay R.R."/>
            <person name="Williams J.G."/>
            <person name="Dear P.H."/>
            <person name="Noegel A.A."/>
            <person name="Barrell B.G."/>
            <person name="Kuspa A."/>
        </authorList>
    </citation>
    <scope>NUCLEOTIDE SEQUENCE [LARGE SCALE GENOMIC DNA]</scope>
    <source>
        <strain>AX4</strain>
    </source>
</reference>
<protein>
    <recommendedName>
        <fullName>Dictomallein-3</fullName>
        <ecNumber>3.4.24.-</ecNumber>
    </recommendedName>
</protein>
<sequence>MKLILILIFLFSCILFINCENLIKVLDVRLAQTHVIPVEGKTWNLNNNIQHMSIVGNRRAFLLASFDDPTQTYYTTIWFNDKLVGPLKLNDPSQLPPTEDKGEKYSTVHHSIMLSKEWVKVGMKIQFFTIGNDGNGSSVVKSSDFFYPDVGQDYTLKMWTLPFYLFGANDTNTQPFSKTKGIDSEITKELIEKWSCSDLQAINHPIQKIDWSYFVMEPRNGNPAMVITNSDQKKDGYAIMSGVLNILTQIRKVFGESSSSIQIYSPLLHLDSKGKYADPYGGLGGGSRGTGDYTYKGIFIHEQGHAMGLPHAGEAFDKGTFPYQKGSLSGSEWGFDANHNEFLGNFLPPTAEYYRNCQKSFLIDNKGRCIKQSVMQGGAGDQSSKYRFSMFADYEMTTIQNYFKNSIYYDETNGTYKKWNDTSKSYYDYKPITQNKGLWGIDDGTPIERDIDVYTILFTHSTVGPKELSQIYPLLKSKGNLMRQFDPTNKTEMAIIIPNTGAIPWYCHDSGCDYTVRVTFDDNSLQHVLLQQGKRKYWKPMSDLKDNIMDPKSSDSFMLGGINVKANKKINKVELLETLLGWNGISNNATVLASKSF</sequence>
<evidence type="ECO:0000250" key="1"/>
<evidence type="ECO:0000255" key="2"/>
<evidence type="ECO:0000305" key="3"/>
<name>DTML3_DICDI</name>
<organism>
    <name type="scientific">Dictyostelium discoideum</name>
    <name type="common">Social amoeba</name>
    <dbReference type="NCBI Taxonomy" id="44689"/>
    <lineage>
        <taxon>Eukaryota</taxon>
        <taxon>Amoebozoa</taxon>
        <taxon>Evosea</taxon>
        <taxon>Eumycetozoa</taxon>
        <taxon>Dictyostelia</taxon>
        <taxon>Dictyosteliales</taxon>
        <taxon>Dictyosteliaceae</taxon>
        <taxon>Dictyostelium</taxon>
    </lineage>
</organism>
<gene>
    <name type="primary">dtmlC</name>
    <name type="ORF">DDB_G0292824</name>
</gene>
<keyword id="KW-0378">Hydrolase</keyword>
<keyword id="KW-0479">Metal-binding</keyword>
<keyword id="KW-0482">Metalloprotease</keyword>
<keyword id="KW-0645">Protease</keyword>
<keyword id="KW-1185">Reference proteome</keyword>
<keyword id="KW-0964">Secreted</keyword>
<keyword id="KW-0732">Signal</keyword>
<keyword id="KW-0862">Zinc</keyword>
<feature type="signal peptide" evidence="2">
    <location>
        <begin position="1"/>
        <end position="19"/>
    </location>
</feature>
<feature type="chain" id="PRO_0000322648" description="Dictomallein-3">
    <location>
        <begin position="20"/>
        <end position="597"/>
    </location>
</feature>
<feature type="domain" description="Peptidase M66">
    <location>
        <begin position="148"/>
        <end position="409"/>
    </location>
</feature>
<feature type="active site" evidence="1">
    <location>
        <position position="302"/>
    </location>
</feature>
<feature type="binding site" evidence="1">
    <location>
        <position position="301"/>
    </location>
    <ligand>
        <name>Zn(2+)</name>
        <dbReference type="ChEBI" id="CHEBI:29105"/>
        <note>catalytic</note>
    </ligand>
</feature>
<feature type="binding site" evidence="1">
    <location>
        <position position="305"/>
    </location>
    <ligand>
        <name>Zn(2+)</name>
        <dbReference type="ChEBI" id="CHEBI:29105"/>
        <note>catalytic</note>
    </ligand>
</feature>
<feature type="binding site" evidence="1">
    <location>
        <position position="311"/>
    </location>
    <ligand>
        <name>Zn(2+)</name>
        <dbReference type="ChEBI" id="CHEBI:29105"/>
        <note>catalytic</note>
    </ligand>
</feature>
<dbReference type="EC" id="3.4.24.-"/>
<dbReference type="EMBL" id="AAFI02000197">
    <property type="protein sequence ID" value="EAL60961.1"/>
    <property type="molecule type" value="Genomic_DNA"/>
</dbReference>
<dbReference type="RefSeq" id="XP_629367.1">
    <property type="nucleotide sequence ID" value="XM_629365.1"/>
</dbReference>
<dbReference type="SMR" id="Q54CP9"/>
<dbReference type="FunCoup" id="Q54CP9">
    <property type="interactions" value="4"/>
</dbReference>
<dbReference type="STRING" id="44689.Q54CP9"/>
<dbReference type="PaxDb" id="44689-DDB0252869"/>
<dbReference type="EnsemblProtists" id="EAL60961">
    <property type="protein sequence ID" value="EAL60961"/>
    <property type="gene ID" value="DDB_G0292824"/>
</dbReference>
<dbReference type="GeneID" id="8628884"/>
<dbReference type="KEGG" id="ddi:DDB_G0292824"/>
<dbReference type="dictyBase" id="DDB_G0292824"/>
<dbReference type="VEuPathDB" id="AmoebaDB:DDB_G0292824"/>
<dbReference type="eggNOG" id="ENOG502SN3T">
    <property type="taxonomic scope" value="Eukaryota"/>
</dbReference>
<dbReference type="HOGENOM" id="CLU_451780_0_0_1"/>
<dbReference type="InParanoid" id="Q54CP9"/>
<dbReference type="OMA" id="WWTPTVD"/>
<dbReference type="PhylomeDB" id="Q54CP9"/>
<dbReference type="PRO" id="PR:Q54CP9"/>
<dbReference type="Proteomes" id="UP000002195">
    <property type="component" value="Chromosome 6"/>
</dbReference>
<dbReference type="GO" id="GO:0005576">
    <property type="term" value="C:extracellular region"/>
    <property type="evidence" value="ECO:0007669"/>
    <property type="project" value="UniProtKB-SubCell"/>
</dbReference>
<dbReference type="GO" id="GO:0046872">
    <property type="term" value="F:metal ion binding"/>
    <property type="evidence" value="ECO:0007669"/>
    <property type="project" value="UniProtKB-KW"/>
</dbReference>
<dbReference type="GO" id="GO:0004222">
    <property type="term" value="F:metalloendopeptidase activity"/>
    <property type="evidence" value="ECO:0007669"/>
    <property type="project" value="InterPro"/>
</dbReference>
<dbReference type="GO" id="GO:0006508">
    <property type="term" value="P:proteolysis"/>
    <property type="evidence" value="ECO:0007669"/>
    <property type="project" value="UniProtKB-KW"/>
</dbReference>
<dbReference type="InterPro" id="IPR051256">
    <property type="entry name" value="Dictomallein"/>
</dbReference>
<dbReference type="InterPro" id="IPR019503">
    <property type="entry name" value="Peptidase_M66_dom"/>
</dbReference>
<dbReference type="PANTHER" id="PTHR39540">
    <property type="match status" value="1"/>
</dbReference>
<dbReference type="PANTHER" id="PTHR39540:SF1">
    <property type="entry name" value="DICTOMALLEIN-1-RELATED"/>
    <property type="match status" value="1"/>
</dbReference>
<dbReference type="Pfam" id="PF10462">
    <property type="entry name" value="Peptidase_M66"/>
    <property type="match status" value="1"/>
</dbReference>
<dbReference type="SUPFAM" id="SSF55486">
    <property type="entry name" value="Metalloproteases ('zincins'), catalytic domain"/>
    <property type="match status" value="1"/>
</dbReference>
<dbReference type="PROSITE" id="PS51694">
    <property type="entry name" value="PEPTIDASE_M66"/>
    <property type="match status" value="1"/>
</dbReference>
<comment type="cofactor">
    <cofactor evidence="3">
        <name>Zn(2+)</name>
        <dbReference type="ChEBI" id="CHEBI:29105"/>
    </cofactor>
    <text evidence="3">Binds 1 zinc ion per subunit.</text>
</comment>
<comment type="subcellular location">
    <subcellularLocation>
        <location evidence="3">Secreted</location>
    </subcellularLocation>
</comment>
<comment type="similarity">
    <text evidence="3">Belongs to the dictomallein family.</text>
</comment>
<proteinExistence type="inferred from homology"/>